<protein>
    <recommendedName>
        <fullName evidence="1">Photosystem II protein D1</fullName>
        <shortName evidence="1">PSII D1 protein</shortName>
        <ecNumber evidence="1">1.10.3.9</ecNumber>
    </recommendedName>
    <alternativeName>
        <fullName evidence="1">Photosystem II Q(B) protein</fullName>
    </alternativeName>
</protein>
<dbReference type="EC" id="1.10.3.9" evidence="1"/>
<dbReference type="EMBL" id="EU262890">
    <property type="protein sequence ID" value="ABX10017.1"/>
    <property type="molecule type" value="Genomic_DNA"/>
</dbReference>
<dbReference type="RefSeq" id="YP_001687263.1">
    <property type="nucleotide sequence ID" value="NC_010360.2"/>
</dbReference>
<dbReference type="SMR" id="B0Z524"/>
<dbReference type="GeneID" id="5955295"/>
<dbReference type="GO" id="GO:0009535">
    <property type="term" value="C:chloroplast thylakoid membrane"/>
    <property type="evidence" value="ECO:0007669"/>
    <property type="project" value="UniProtKB-SubCell"/>
</dbReference>
<dbReference type="GO" id="GO:0009523">
    <property type="term" value="C:photosystem II"/>
    <property type="evidence" value="ECO:0007669"/>
    <property type="project" value="UniProtKB-KW"/>
</dbReference>
<dbReference type="GO" id="GO:0016168">
    <property type="term" value="F:chlorophyll binding"/>
    <property type="evidence" value="ECO:0007669"/>
    <property type="project" value="UniProtKB-UniRule"/>
</dbReference>
<dbReference type="GO" id="GO:0045156">
    <property type="term" value="F:electron transporter, transferring electrons within the cyclic electron transport pathway of photosynthesis activity"/>
    <property type="evidence" value="ECO:0007669"/>
    <property type="project" value="InterPro"/>
</dbReference>
<dbReference type="GO" id="GO:0005506">
    <property type="term" value="F:iron ion binding"/>
    <property type="evidence" value="ECO:0007669"/>
    <property type="project" value="UniProtKB-UniRule"/>
</dbReference>
<dbReference type="GO" id="GO:0016682">
    <property type="term" value="F:oxidoreductase activity, acting on diphenols and related substances as donors, oxygen as acceptor"/>
    <property type="evidence" value="ECO:0007669"/>
    <property type="project" value="UniProtKB-UniRule"/>
</dbReference>
<dbReference type="GO" id="GO:0010242">
    <property type="term" value="F:oxygen evolving activity"/>
    <property type="evidence" value="ECO:0007669"/>
    <property type="project" value="UniProtKB-EC"/>
</dbReference>
<dbReference type="GO" id="GO:0009772">
    <property type="term" value="P:photosynthetic electron transport in photosystem II"/>
    <property type="evidence" value="ECO:0007669"/>
    <property type="project" value="InterPro"/>
</dbReference>
<dbReference type="GO" id="GO:0009635">
    <property type="term" value="P:response to herbicide"/>
    <property type="evidence" value="ECO:0007669"/>
    <property type="project" value="UniProtKB-KW"/>
</dbReference>
<dbReference type="CDD" id="cd09289">
    <property type="entry name" value="Photosystem-II_D1"/>
    <property type="match status" value="1"/>
</dbReference>
<dbReference type="FunFam" id="1.20.85.10:FF:000002">
    <property type="entry name" value="Photosystem II protein D1"/>
    <property type="match status" value="1"/>
</dbReference>
<dbReference type="Gene3D" id="1.20.85.10">
    <property type="entry name" value="Photosystem II protein D1-like"/>
    <property type="match status" value="1"/>
</dbReference>
<dbReference type="HAMAP" id="MF_01379">
    <property type="entry name" value="PSII_PsbA_D1"/>
    <property type="match status" value="1"/>
</dbReference>
<dbReference type="InterPro" id="IPR055266">
    <property type="entry name" value="D1/D2"/>
</dbReference>
<dbReference type="InterPro" id="IPR036854">
    <property type="entry name" value="Photo_II_D1/D2_sf"/>
</dbReference>
<dbReference type="InterPro" id="IPR000484">
    <property type="entry name" value="Photo_RC_L/M"/>
</dbReference>
<dbReference type="InterPro" id="IPR055265">
    <property type="entry name" value="Photo_RC_L/M_CS"/>
</dbReference>
<dbReference type="InterPro" id="IPR005867">
    <property type="entry name" value="PSII_D1"/>
</dbReference>
<dbReference type="NCBIfam" id="TIGR01151">
    <property type="entry name" value="psbA"/>
    <property type="match status" value="1"/>
</dbReference>
<dbReference type="PANTHER" id="PTHR33149:SF12">
    <property type="entry name" value="PHOTOSYSTEM II D2 PROTEIN"/>
    <property type="match status" value="1"/>
</dbReference>
<dbReference type="PANTHER" id="PTHR33149">
    <property type="entry name" value="PHOTOSYSTEM II PROTEIN D1"/>
    <property type="match status" value="1"/>
</dbReference>
<dbReference type="Pfam" id="PF00124">
    <property type="entry name" value="Photo_RC"/>
    <property type="match status" value="1"/>
</dbReference>
<dbReference type="PRINTS" id="PR00256">
    <property type="entry name" value="REACTNCENTRE"/>
</dbReference>
<dbReference type="SUPFAM" id="SSF81483">
    <property type="entry name" value="Bacterial photosystem II reaction centre, L and M subunits"/>
    <property type="match status" value="1"/>
</dbReference>
<dbReference type="PROSITE" id="PS00244">
    <property type="entry name" value="REACTION_CENTER"/>
    <property type="match status" value="1"/>
</dbReference>
<reference key="1">
    <citation type="journal article" date="2008" name="Nucleic Acids Res.">
        <title>The complete nucleotide sequences of the five genetically distinct plastid genomes of Oenothera, subsection Oenothera: I. Sequence evaluation and plastome evolution.</title>
        <authorList>
            <person name="Greiner S."/>
            <person name="Wang X."/>
            <person name="Rauwolf U."/>
            <person name="Silber M.V."/>
            <person name="Mayer K."/>
            <person name="Meurer J."/>
            <person name="Haberer G."/>
            <person name="Herrmann R.G."/>
        </authorList>
    </citation>
    <scope>NUCLEOTIDE SEQUENCE [LARGE SCALE GENOMIC DNA]</scope>
    <source>
        <strain>cv. Rr-lamarckiana Sweden</strain>
    </source>
</reference>
<geneLocation type="chloroplast"/>
<feature type="initiator methionine" description="Removed" evidence="1">
    <location>
        <position position="1"/>
    </location>
</feature>
<feature type="chain" id="PRO_0000340036" description="Photosystem II protein D1" evidence="1">
    <location>
        <begin position="2"/>
        <end position="344"/>
    </location>
</feature>
<feature type="propeptide" id="PRO_0000340037" evidence="1">
    <location>
        <begin position="345"/>
        <end position="353"/>
    </location>
</feature>
<feature type="transmembrane region" description="Helical" evidence="1">
    <location>
        <begin position="29"/>
        <end position="46"/>
    </location>
</feature>
<feature type="transmembrane region" description="Helical" evidence="1">
    <location>
        <begin position="118"/>
        <end position="133"/>
    </location>
</feature>
<feature type="transmembrane region" description="Helical" evidence="1">
    <location>
        <begin position="142"/>
        <end position="156"/>
    </location>
</feature>
<feature type="transmembrane region" description="Helical" evidence="1">
    <location>
        <begin position="197"/>
        <end position="218"/>
    </location>
</feature>
<feature type="transmembrane region" description="Helical" evidence="1">
    <location>
        <begin position="274"/>
        <end position="288"/>
    </location>
</feature>
<feature type="binding site" description="axial binding residue" evidence="1">
    <location>
        <position position="118"/>
    </location>
    <ligand>
        <name>chlorophyll a</name>
        <dbReference type="ChEBI" id="CHEBI:58416"/>
        <label>ChlzD1</label>
    </ligand>
    <ligandPart>
        <name>Mg</name>
        <dbReference type="ChEBI" id="CHEBI:25107"/>
    </ligandPart>
</feature>
<feature type="binding site" evidence="1">
    <location>
        <position position="126"/>
    </location>
    <ligand>
        <name>pheophytin a</name>
        <dbReference type="ChEBI" id="CHEBI:136840"/>
        <label>D1</label>
    </ligand>
</feature>
<feature type="binding site" evidence="1">
    <location>
        <position position="170"/>
    </location>
    <ligand>
        <name>[CaMn4O5] cluster</name>
        <dbReference type="ChEBI" id="CHEBI:189552"/>
    </ligand>
</feature>
<feature type="binding site" evidence="1">
    <location>
        <position position="189"/>
    </location>
    <ligand>
        <name>[CaMn4O5] cluster</name>
        <dbReference type="ChEBI" id="CHEBI:189552"/>
    </ligand>
</feature>
<feature type="binding site" description="axial binding residue" evidence="1">
    <location>
        <position position="198"/>
    </location>
    <ligand>
        <name>chlorophyll a</name>
        <dbReference type="ChEBI" id="CHEBI:58416"/>
        <label>PD1</label>
    </ligand>
    <ligandPart>
        <name>Mg</name>
        <dbReference type="ChEBI" id="CHEBI:25107"/>
    </ligandPart>
</feature>
<feature type="binding site" evidence="1">
    <location>
        <position position="215"/>
    </location>
    <ligand>
        <name>a quinone</name>
        <dbReference type="ChEBI" id="CHEBI:132124"/>
        <label>B</label>
    </ligand>
</feature>
<feature type="binding site" evidence="1">
    <location>
        <position position="215"/>
    </location>
    <ligand>
        <name>Fe cation</name>
        <dbReference type="ChEBI" id="CHEBI:24875"/>
        <note>ligand shared with heterodimeric partner</note>
    </ligand>
</feature>
<feature type="binding site" evidence="1">
    <location>
        <begin position="264"/>
        <end position="265"/>
    </location>
    <ligand>
        <name>a quinone</name>
        <dbReference type="ChEBI" id="CHEBI:132124"/>
        <label>B</label>
    </ligand>
</feature>
<feature type="binding site" evidence="1">
    <location>
        <position position="272"/>
    </location>
    <ligand>
        <name>Fe cation</name>
        <dbReference type="ChEBI" id="CHEBI:24875"/>
        <note>ligand shared with heterodimeric partner</note>
    </ligand>
</feature>
<feature type="binding site" evidence="1">
    <location>
        <position position="332"/>
    </location>
    <ligand>
        <name>[CaMn4O5] cluster</name>
        <dbReference type="ChEBI" id="CHEBI:189552"/>
    </ligand>
</feature>
<feature type="binding site" evidence="1">
    <location>
        <position position="333"/>
    </location>
    <ligand>
        <name>[CaMn4O5] cluster</name>
        <dbReference type="ChEBI" id="CHEBI:189552"/>
    </ligand>
</feature>
<feature type="binding site" evidence="1">
    <location>
        <position position="342"/>
    </location>
    <ligand>
        <name>[CaMn4O5] cluster</name>
        <dbReference type="ChEBI" id="CHEBI:189552"/>
    </ligand>
</feature>
<feature type="binding site" evidence="1">
    <location>
        <position position="344"/>
    </location>
    <ligand>
        <name>[CaMn4O5] cluster</name>
        <dbReference type="ChEBI" id="CHEBI:189552"/>
    </ligand>
</feature>
<feature type="site" description="Tyrosine radical intermediate" evidence="1">
    <location>
        <position position="161"/>
    </location>
</feature>
<feature type="site" description="Stabilizes free radical intermediate" evidence="1">
    <location>
        <position position="190"/>
    </location>
</feature>
<feature type="site" description="Cleavage; by CTPA" evidence="1">
    <location>
        <begin position="344"/>
        <end position="345"/>
    </location>
</feature>
<feature type="modified residue" description="N-acetylthreonine" evidence="1">
    <location>
        <position position="2"/>
    </location>
</feature>
<feature type="modified residue" description="Phosphothreonine" evidence="1">
    <location>
        <position position="2"/>
    </location>
</feature>
<keyword id="KW-0007">Acetylation</keyword>
<keyword id="KW-0106">Calcium</keyword>
<keyword id="KW-0148">Chlorophyll</keyword>
<keyword id="KW-0150">Chloroplast</keyword>
<keyword id="KW-0157">Chromophore</keyword>
<keyword id="KW-0249">Electron transport</keyword>
<keyword id="KW-0359">Herbicide resistance</keyword>
<keyword id="KW-0408">Iron</keyword>
<keyword id="KW-0460">Magnesium</keyword>
<keyword id="KW-0464">Manganese</keyword>
<keyword id="KW-0472">Membrane</keyword>
<keyword id="KW-0479">Metal-binding</keyword>
<keyword id="KW-0560">Oxidoreductase</keyword>
<keyword id="KW-0597">Phosphoprotein</keyword>
<keyword id="KW-0602">Photosynthesis</keyword>
<keyword id="KW-0604">Photosystem II</keyword>
<keyword id="KW-0934">Plastid</keyword>
<keyword id="KW-0793">Thylakoid</keyword>
<keyword id="KW-0812">Transmembrane</keyword>
<keyword id="KW-1133">Transmembrane helix</keyword>
<keyword id="KW-0813">Transport</keyword>
<gene>
    <name evidence="1" type="primary">psbA</name>
</gene>
<evidence type="ECO:0000255" key="1">
    <source>
        <dbReference type="HAMAP-Rule" id="MF_01379"/>
    </source>
</evidence>
<comment type="function">
    <text evidence="1">Photosystem II (PSII) is a light-driven water:plastoquinone oxidoreductase that uses light energy to abstract electrons from H(2)O, generating O(2) and a proton gradient subsequently used for ATP formation. It consists of a core antenna complex that captures photons, and an electron transfer chain that converts photonic excitation into a charge separation. The D1/D2 (PsbA/PsbD) reaction center heterodimer binds P680, the primary electron donor of PSII as well as several subsequent electron acceptors.</text>
</comment>
<comment type="catalytic activity">
    <reaction evidence="1">
        <text>2 a plastoquinone + 4 hnu + 2 H2O = 2 a plastoquinol + O2</text>
        <dbReference type="Rhea" id="RHEA:36359"/>
        <dbReference type="Rhea" id="RHEA-COMP:9561"/>
        <dbReference type="Rhea" id="RHEA-COMP:9562"/>
        <dbReference type="ChEBI" id="CHEBI:15377"/>
        <dbReference type="ChEBI" id="CHEBI:15379"/>
        <dbReference type="ChEBI" id="CHEBI:17757"/>
        <dbReference type="ChEBI" id="CHEBI:30212"/>
        <dbReference type="ChEBI" id="CHEBI:62192"/>
        <dbReference type="EC" id="1.10.3.9"/>
    </reaction>
</comment>
<comment type="cofactor">
    <text evidence="1">The D1/D2 heterodimer binds P680, chlorophylls that are the primary electron donor of PSII, and subsequent electron acceptors. It shares a non-heme iron and each subunit binds pheophytin, quinone, additional chlorophylls, carotenoids and lipids. D1 provides most of the ligands for the Mn4-Ca-O5 cluster of the oxygen-evolving complex (OEC). There is also a Cl(-1) ion associated with D1 and D2, which is required for oxygen evolution. The PSII complex binds additional chlorophylls, carotenoids and specific lipids.</text>
</comment>
<comment type="subunit">
    <text evidence="1">PSII is composed of 1 copy each of membrane proteins PsbA, PsbB, PsbC, PsbD, PsbE, PsbF, PsbH, PsbI, PsbJ, PsbK, PsbL, PsbM, PsbT, PsbX, PsbY, PsbZ, Psb30/Ycf12, at least 3 peripheral proteins of the oxygen-evolving complex and a large number of cofactors. It forms dimeric complexes.</text>
</comment>
<comment type="subcellular location">
    <subcellularLocation>
        <location evidence="1">Plastid</location>
        <location evidence="1">Chloroplast thylakoid membrane</location>
        <topology evidence="1">Multi-pass membrane protein</topology>
    </subcellularLocation>
</comment>
<comment type="PTM">
    <text evidence="1">Tyr-161 forms a radical intermediate that is referred to as redox-active TyrZ, YZ or Y-Z.</text>
</comment>
<comment type="PTM">
    <text evidence="1">C-terminally processed by CTPA; processing is essential to allow assembly of the oxygen-evolving complex and thus photosynthetic growth.</text>
</comment>
<comment type="miscellaneous">
    <text evidence="1">2 of the reaction center chlorophylls (ChlD1 and ChlD2) are entirely coordinated by water.</text>
</comment>
<comment type="miscellaneous">
    <text evidence="1">Herbicides such as atrazine, BNT, diuron or ioxynil bind in the Q(B) binding site and block subsequent electron transfer.</text>
</comment>
<comment type="similarity">
    <text evidence="1">Belongs to the reaction center PufL/M/PsbA/D family.</text>
</comment>
<accession>B0Z524</accession>
<organism>
    <name type="scientific">Oenothera glazioviana</name>
    <name type="common">Large-flowered evening primrose</name>
    <name type="synonym">Oenothera erythrosepala</name>
    <dbReference type="NCBI Taxonomy" id="482428"/>
    <lineage>
        <taxon>Eukaryota</taxon>
        <taxon>Viridiplantae</taxon>
        <taxon>Streptophyta</taxon>
        <taxon>Embryophyta</taxon>
        <taxon>Tracheophyta</taxon>
        <taxon>Spermatophyta</taxon>
        <taxon>Magnoliopsida</taxon>
        <taxon>eudicotyledons</taxon>
        <taxon>Gunneridae</taxon>
        <taxon>Pentapetalae</taxon>
        <taxon>rosids</taxon>
        <taxon>malvids</taxon>
        <taxon>Myrtales</taxon>
        <taxon>Onagraceae</taxon>
        <taxon>Onagroideae</taxon>
        <taxon>Onagreae</taxon>
        <taxon>Oenothera</taxon>
    </lineage>
</organism>
<sequence length="353" mass="38937">MTAILERRESESLWGRFCNWITSTENRLYIGWFGVLMIPTLLTATSVFIIAFIAAPPVDIDGIREPVSGSLLYGNNIISGAIIPTSAAIGLHFYPIWEAASVDEWLYNGGPYELIVLHFLLGVACYMGREWELSFRLGMRPWIAVAYSAPVAAATAVFLIYPIGQGSFSDGMPLGISGTFNFMIVFQAEHNILMHPFHMLGVAGVFGGSLFSAMHGSLVTSSLIRETTENESANEGYRFGQEEETYNIVAAHGYFGRLIFQYASFNNSRSLHFFLAAWPVVGIWFTALGISTMAFNLNGFNFNQSVVDSQGRVINTWADIINRANLGMEVMHERNAHNFPLDLAAVEAPSTNG</sequence>
<proteinExistence type="inferred from homology"/>
<name>PSBA_OENGL</name>